<feature type="chain" id="PRO_0000225357" description="NAD(P)H-quinone oxidoreductase subunit 2">
    <location>
        <begin position="1"/>
        <end position="520"/>
    </location>
</feature>
<feature type="transmembrane region" description="Helical" evidence="1">
    <location>
        <begin position="26"/>
        <end position="46"/>
    </location>
</feature>
<feature type="transmembrane region" description="Helical" evidence="1">
    <location>
        <begin position="54"/>
        <end position="74"/>
    </location>
</feature>
<feature type="transmembrane region" description="Helical" evidence="1">
    <location>
        <begin position="91"/>
        <end position="111"/>
    </location>
</feature>
<feature type="transmembrane region" description="Helical" evidence="1">
    <location>
        <begin position="120"/>
        <end position="140"/>
    </location>
</feature>
<feature type="transmembrane region" description="Helical" evidence="1">
    <location>
        <begin position="144"/>
        <end position="164"/>
    </location>
</feature>
<feature type="transmembrane region" description="Helical" evidence="1">
    <location>
        <begin position="179"/>
        <end position="199"/>
    </location>
</feature>
<feature type="transmembrane region" description="Helical" evidence="1">
    <location>
        <begin position="220"/>
        <end position="240"/>
    </location>
</feature>
<feature type="transmembrane region" description="Helical" evidence="1">
    <location>
        <begin position="252"/>
        <end position="272"/>
    </location>
</feature>
<feature type="transmembrane region" description="Helical" evidence="1">
    <location>
        <begin position="288"/>
        <end position="308"/>
    </location>
</feature>
<feature type="transmembrane region" description="Helical" evidence="1">
    <location>
        <begin position="314"/>
        <end position="334"/>
    </location>
</feature>
<feature type="transmembrane region" description="Helical" evidence="1">
    <location>
        <begin position="342"/>
        <end position="362"/>
    </location>
</feature>
<feature type="transmembrane region" description="Helical" evidence="1">
    <location>
        <begin position="386"/>
        <end position="406"/>
    </location>
</feature>
<feature type="transmembrane region" description="Helical" evidence="1">
    <location>
        <begin position="421"/>
        <end position="441"/>
    </location>
</feature>
<feature type="transmembrane region" description="Helical" evidence="1">
    <location>
        <begin position="474"/>
        <end position="494"/>
    </location>
</feature>
<reference key="1">
    <citation type="journal article" date="2007" name="PLoS Genet.">
        <title>Patterns and implications of gene gain and loss in the evolution of Prochlorococcus.</title>
        <authorList>
            <person name="Kettler G.C."/>
            <person name="Martiny A.C."/>
            <person name="Huang K."/>
            <person name="Zucker J."/>
            <person name="Coleman M.L."/>
            <person name="Rodrigue S."/>
            <person name="Chen F."/>
            <person name="Lapidus A."/>
            <person name="Ferriera S."/>
            <person name="Johnson J."/>
            <person name="Steglich C."/>
            <person name="Church G.M."/>
            <person name="Richardson P."/>
            <person name="Chisholm S.W."/>
        </authorList>
    </citation>
    <scope>NUCLEOTIDE SEQUENCE [LARGE SCALE GENOMIC DNA]</scope>
    <source>
        <strain>NATL2A</strain>
    </source>
</reference>
<accession>Q46GY3</accession>
<sequence length="520" mass="55018">MGELLSFQIFINEPVELLNLSLNAKAVLPEAAVLMAMLGTLLVDLAGEKISARWSPPICYAGLGSALILLAMQWDGEIQESFLGAFIADNLAIAFRGVIVLSTLISLLISWRYADQNGSPIGEFAAILLAATLGAMLLCGSTDLVSVFVSLETLSVASYLLSGYLKRDSRSSEAALKYLLVGSAAAAVFLYGASLLYGISGSTNLKEIGTTLLSAPTPLSALALVFVLSTVAFKIAAVPFHQWTPDVYEGSPTPVVAFLSVGSKAAGFALAIRILVGCFSAFDTQWKLLFTVLAVLSMSLGNVVALAQKSMKRMLAYSSIGQAGFVMIGLVCGTEDGFAAMVLYMAAYLFMNLGAFACIILFSIRTGSDQISDYAGLYQKDPLITLGLSLCLLSLGGIPPMLGFFGKIYLFFAGWADGQYLLVTVGLVTSVISIYYYISVIKMMVVTEPKEASDVVKAYPSIEWSIPGMSSLKVALIFCVLVTAIGGIISNPLFNFADSAVNGTPLLREAITLASKSSIG</sequence>
<gene>
    <name evidence="1" type="primary">ndhB</name>
    <name type="ordered locus">PMN2A_1767</name>
</gene>
<comment type="function">
    <text evidence="1">NDH-1 shuttles electrons from an unknown electron donor, via FMN and iron-sulfur (Fe-S) centers, to quinones in the respiratory and/or the photosynthetic chain. The immediate electron acceptor for the enzyme in this species is believed to be plastoquinone. Couples the redox reaction to proton translocation, and thus conserves the redox energy in a proton gradient. Cyanobacterial NDH-1 also plays a role in inorganic carbon-concentration.</text>
</comment>
<comment type="catalytic activity">
    <reaction evidence="1">
        <text>a plastoquinone + NADH + (n+1) H(+)(in) = a plastoquinol + NAD(+) + n H(+)(out)</text>
        <dbReference type="Rhea" id="RHEA:42608"/>
        <dbReference type="Rhea" id="RHEA-COMP:9561"/>
        <dbReference type="Rhea" id="RHEA-COMP:9562"/>
        <dbReference type="ChEBI" id="CHEBI:15378"/>
        <dbReference type="ChEBI" id="CHEBI:17757"/>
        <dbReference type="ChEBI" id="CHEBI:57540"/>
        <dbReference type="ChEBI" id="CHEBI:57945"/>
        <dbReference type="ChEBI" id="CHEBI:62192"/>
    </reaction>
</comment>
<comment type="catalytic activity">
    <reaction evidence="1">
        <text>a plastoquinone + NADPH + (n+1) H(+)(in) = a plastoquinol + NADP(+) + n H(+)(out)</text>
        <dbReference type="Rhea" id="RHEA:42612"/>
        <dbReference type="Rhea" id="RHEA-COMP:9561"/>
        <dbReference type="Rhea" id="RHEA-COMP:9562"/>
        <dbReference type="ChEBI" id="CHEBI:15378"/>
        <dbReference type="ChEBI" id="CHEBI:17757"/>
        <dbReference type="ChEBI" id="CHEBI:57783"/>
        <dbReference type="ChEBI" id="CHEBI:58349"/>
        <dbReference type="ChEBI" id="CHEBI:62192"/>
    </reaction>
</comment>
<comment type="subunit">
    <text evidence="1">NDH-1 can be composed of about 15 different subunits; different subcomplexes with different compositions have been identified which probably have different functions.</text>
</comment>
<comment type="subcellular location">
    <subcellularLocation>
        <location evidence="1">Cellular thylakoid membrane</location>
        <topology evidence="1">Multi-pass membrane protein</topology>
    </subcellularLocation>
</comment>
<comment type="similarity">
    <text evidence="1">Belongs to the complex I subunit 2 family.</text>
</comment>
<evidence type="ECO:0000255" key="1">
    <source>
        <dbReference type="HAMAP-Rule" id="MF_00445"/>
    </source>
</evidence>
<proteinExistence type="inferred from homology"/>
<keyword id="KW-0472">Membrane</keyword>
<keyword id="KW-0520">NAD</keyword>
<keyword id="KW-0521">NADP</keyword>
<keyword id="KW-0618">Plastoquinone</keyword>
<keyword id="KW-0874">Quinone</keyword>
<keyword id="KW-1185">Reference proteome</keyword>
<keyword id="KW-0793">Thylakoid</keyword>
<keyword id="KW-1278">Translocase</keyword>
<keyword id="KW-0812">Transmembrane</keyword>
<keyword id="KW-1133">Transmembrane helix</keyword>
<keyword id="KW-0813">Transport</keyword>
<protein>
    <recommendedName>
        <fullName evidence="1">NAD(P)H-quinone oxidoreductase subunit 2</fullName>
        <ecNumber evidence="1">7.1.1.-</ecNumber>
    </recommendedName>
    <alternativeName>
        <fullName evidence="1">NAD(P)H dehydrogenase subunit 2</fullName>
    </alternativeName>
    <alternativeName>
        <fullName evidence="1">NADH-plastoquinone oxidoreductase subunit 2</fullName>
    </alternativeName>
    <alternativeName>
        <fullName evidence="1">NDH-1, subunit 2</fullName>
    </alternativeName>
</protein>
<dbReference type="EC" id="7.1.1.-" evidence="1"/>
<dbReference type="EMBL" id="CP000095">
    <property type="protein sequence ID" value="AAZ59255.1"/>
    <property type="molecule type" value="Genomic_DNA"/>
</dbReference>
<dbReference type="RefSeq" id="WP_011294400.1">
    <property type="nucleotide sequence ID" value="NC_007335.2"/>
</dbReference>
<dbReference type="SMR" id="Q46GY3"/>
<dbReference type="STRING" id="59920.PMN2A_1767"/>
<dbReference type="KEGG" id="pmn:PMN2A_1767"/>
<dbReference type="HOGENOM" id="CLU_007100_1_2_3"/>
<dbReference type="OrthoDB" id="9811718at2"/>
<dbReference type="PhylomeDB" id="Q46GY3"/>
<dbReference type="Proteomes" id="UP000002535">
    <property type="component" value="Chromosome"/>
</dbReference>
<dbReference type="GO" id="GO:0031676">
    <property type="term" value="C:plasma membrane-derived thylakoid membrane"/>
    <property type="evidence" value="ECO:0007669"/>
    <property type="project" value="UniProtKB-SubCell"/>
</dbReference>
<dbReference type="GO" id="GO:0008137">
    <property type="term" value="F:NADH dehydrogenase (ubiquinone) activity"/>
    <property type="evidence" value="ECO:0007669"/>
    <property type="project" value="InterPro"/>
</dbReference>
<dbReference type="GO" id="GO:0048038">
    <property type="term" value="F:quinone binding"/>
    <property type="evidence" value="ECO:0007669"/>
    <property type="project" value="UniProtKB-KW"/>
</dbReference>
<dbReference type="GO" id="GO:0042773">
    <property type="term" value="P:ATP synthesis coupled electron transport"/>
    <property type="evidence" value="ECO:0007669"/>
    <property type="project" value="InterPro"/>
</dbReference>
<dbReference type="GO" id="GO:0019684">
    <property type="term" value="P:photosynthesis, light reaction"/>
    <property type="evidence" value="ECO:0007669"/>
    <property type="project" value="UniProtKB-UniRule"/>
</dbReference>
<dbReference type="HAMAP" id="MF_00445">
    <property type="entry name" value="NDH1_NuoN_1"/>
    <property type="match status" value="1"/>
</dbReference>
<dbReference type="InterPro" id="IPR010096">
    <property type="entry name" value="NADH-Q_OxRdtase_suN/2"/>
</dbReference>
<dbReference type="InterPro" id="IPR001750">
    <property type="entry name" value="ND/Mrp_TM"/>
</dbReference>
<dbReference type="NCBIfam" id="TIGR01770">
    <property type="entry name" value="NDH_I_N"/>
    <property type="match status" value="1"/>
</dbReference>
<dbReference type="NCBIfam" id="NF002701">
    <property type="entry name" value="PRK02504.1"/>
    <property type="match status" value="1"/>
</dbReference>
<dbReference type="PANTHER" id="PTHR22773">
    <property type="entry name" value="NADH DEHYDROGENASE"/>
    <property type="match status" value="1"/>
</dbReference>
<dbReference type="Pfam" id="PF00361">
    <property type="entry name" value="Proton_antipo_M"/>
    <property type="match status" value="1"/>
</dbReference>
<organism>
    <name type="scientific">Prochlorococcus marinus (strain NATL2A)</name>
    <dbReference type="NCBI Taxonomy" id="59920"/>
    <lineage>
        <taxon>Bacteria</taxon>
        <taxon>Bacillati</taxon>
        <taxon>Cyanobacteriota</taxon>
        <taxon>Cyanophyceae</taxon>
        <taxon>Synechococcales</taxon>
        <taxon>Prochlorococcaceae</taxon>
        <taxon>Prochlorococcus</taxon>
    </lineage>
</organism>
<name>NU2C_PROMT</name>